<sequence>MNYYRKRLSPLPPNQPIDYKDTELLRKFITERGKILPRRITGLTAKQQRDLTTAVKRSRLVALLPFVNKEI</sequence>
<protein>
    <recommendedName>
        <fullName evidence="1">Small ribosomal subunit protein bS18</fullName>
    </recommendedName>
    <alternativeName>
        <fullName evidence="2">30S ribosomal protein S18</fullName>
    </alternativeName>
</protein>
<proteinExistence type="inferred from homology"/>
<evidence type="ECO:0000255" key="1">
    <source>
        <dbReference type="HAMAP-Rule" id="MF_00270"/>
    </source>
</evidence>
<evidence type="ECO:0000305" key="2"/>
<organism>
    <name type="scientific">Synechocystis sp. (strain ATCC 27184 / PCC 6803 / Kazusa)</name>
    <dbReference type="NCBI Taxonomy" id="1111708"/>
    <lineage>
        <taxon>Bacteria</taxon>
        <taxon>Bacillati</taxon>
        <taxon>Cyanobacteriota</taxon>
        <taxon>Cyanophyceae</taxon>
        <taxon>Synechococcales</taxon>
        <taxon>Merismopediaceae</taxon>
        <taxon>Synechocystis</taxon>
    </lineage>
</organism>
<dbReference type="EMBL" id="BA000022">
    <property type="protein sequence ID" value="BAA10509.1"/>
    <property type="molecule type" value="Genomic_DNA"/>
</dbReference>
<dbReference type="PIR" id="S75774">
    <property type="entry name" value="S75774"/>
</dbReference>
<dbReference type="SMR" id="P48946"/>
<dbReference type="FunCoup" id="P48946">
    <property type="interactions" value="437"/>
</dbReference>
<dbReference type="IntAct" id="P48946">
    <property type="interactions" value="4"/>
</dbReference>
<dbReference type="STRING" id="1148.gene:10500013"/>
<dbReference type="PaxDb" id="1148-1001265"/>
<dbReference type="EnsemblBacteria" id="BAA10509">
    <property type="protein sequence ID" value="BAA10509"/>
    <property type="gene ID" value="BAA10509"/>
</dbReference>
<dbReference type="KEGG" id="syn:ssr1399"/>
<dbReference type="eggNOG" id="COG0238">
    <property type="taxonomic scope" value="Bacteria"/>
</dbReference>
<dbReference type="InParanoid" id="P48946"/>
<dbReference type="PhylomeDB" id="P48946"/>
<dbReference type="Proteomes" id="UP000001425">
    <property type="component" value="Chromosome"/>
</dbReference>
<dbReference type="GO" id="GO:0022627">
    <property type="term" value="C:cytosolic small ribosomal subunit"/>
    <property type="evidence" value="ECO:0000318"/>
    <property type="project" value="GO_Central"/>
</dbReference>
<dbReference type="GO" id="GO:0070181">
    <property type="term" value="F:small ribosomal subunit rRNA binding"/>
    <property type="evidence" value="ECO:0000318"/>
    <property type="project" value="GO_Central"/>
</dbReference>
<dbReference type="GO" id="GO:0003735">
    <property type="term" value="F:structural constituent of ribosome"/>
    <property type="evidence" value="ECO:0000318"/>
    <property type="project" value="GO_Central"/>
</dbReference>
<dbReference type="GO" id="GO:0006412">
    <property type="term" value="P:translation"/>
    <property type="evidence" value="ECO:0000318"/>
    <property type="project" value="GO_Central"/>
</dbReference>
<dbReference type="Gene3D" id="4.10.640.10">
    <property type="entry name" value="Ribosomal protein S18"/>
    <property type="match status" value="1"/>
</dbReference>
<dbReference type="HAMAP" id="MF_00270">
    <property type="entry name" value="Ribosomal_bS18"/>
    <property type="match status" value="1"/>
</dbReference>
<dbReference type="InterPro" id="IPR001648">
    <property type="entry name" value="Ribosomal_bS18"/>
</dbReference>
<dbReference type="InterPro" id="IPR018275">
    <property type="entry name" value="Ribosomal_bS18_CS"/>
</dbReference>
<dbReference type="InterPro" id="IPR036870">
    <property type="entry name" value="Ribosomal_bS18_sf"/>
</dbReference>
<dbReference type="NCBIfam" id="TIGR00165">
    <property type="entry name" value="S18"/>
    <property type="match status" value="1"/>
</dbReference>
<dbReference type="PANTHER" id="PTHR13479">
    <property type="entry name" value="30S RIBOSOMAL PROTEIN S18"/>
    <property type="match status" value="1"/>
</dbReference>
<dbReference type="PANTHER" id="PTHR13479:SF40">
    <property type="entry name" value="SMALL RIBOSOMAL SUBUNIT PROTEIN BS18M"/>
    <property type="match status" value="1"/>
</dbReference>
<dbReference type="Pfam" id="PF01084">
    <property type="entry name" value="Ribosomal_S18"/>
    <property type="match status" value="1"/>
</dbReference>
<dbReference type="PRINTS" id="PR00974">
    <property type="entry name" value="RIBOSOMALS18"/>
</dbReference>
<dbReference type="SUPFAM" id="SSF46911">
    <property type="entry name" value="Ribosomal protein S18"/>
    <property type="match status" value="1"/>
</dbReference>
<dbReference type="PROSITE" id="PS00057">
    <property type="entry name" value="RIBOSOMAL_S18"/>
    <property type="match status" value="1"/>
</dbReference>
<gene>
    <name evidence="1" type="primary">rpsR</name>
    <name evidence="1" type="synonym">rps18</name>
    <name type="ordered locus">ssr1399</name>
</gene>
<feature type="chain" id="PRO_0000111247" description="Small ribosomal subunit protein bS18">
    <location>
        <begin position="1"/>
        <end position="71"/>
    </location>
</feature>
<reference key="1">
    <citation type="journal article" date="1995" name="DNA Res.">
        <title>Sequence analysis of the genome of the unicellular cyanobacterium Synechocystis sp. strain PCC6803. I. Sequence features in the 1 Mb region from map positions 64% to 92% of the genome.</title>
        <authorList>
            <person name="Kaneko T."/>
            <person name="Tanaka A."/>
            <person name="Sato S."/>
            <person name="Kotani H."/>
            <person name="Sazuka T."/>
            <person name="Miyajima N."/>
            <person name="Sugiura M."/>
            <person name="Tabata S."/>
        </authorList>
    </citation>
    <scope>NUCLEOTIDE SEQUENCE [LARGE SCALE GENOMIC DNA]</scope>
    <source>
        <strain>ATCC 27184 / PCC 6803 / N-1</strain>
    </source>
</reference>
<reference key="2">
    <citation type="journal article" date="1996" name="DNA Res.">
        <title>Sequence analysis of the genome of the unicellular cyanobacterium Synechocystis sp. strain PCC6803. II. Sequence determination of the entire genome and assignment of potential protein-coding regions.</title>
        <authorList>
            <person name="Kaneko T."/>
            <person name="Sato S."/>
            <person name="Kotani H."/>
            <person name="Tanaka A."/>
            <person name="Asamizu E."/>
            <person name="Nakamura Y."/>
            <person name="Miyajima N."/>
            <person name="Hirosawa M."/>
            <person name="Sugiura M."/>
            <person name="Sasamoto S."/>
            <person name="Kimura T."/>
            <person name="Hosouchi T."/>
            <person name="Matsuno A."/>
            <person name="Muraki A."/>
            <person name="Nakazaki N."/>
            <person name="Naruo K."/>
            <person name="Okumura S."/>
            <person name="Shimpo S."/>
            <person name="Takeuchi C."/>
            <person name="Wada T."/>
            <person name="Watanabe A."/>
            <person name="Yamada M."/>
            <person name="Yasuda M."/>
            <person name="Tabata S."/>
        </authorList>
    </citation>
    <scope>NUCLEOTIDE SEQUENCE [LARGE SCALE GENOMIC DNA]</scope>
    <source>
        <strain>ATCC 27184 / PCC 6803 / Kazusa</strain>
    </source>
</reference>
<name>RS18_SYNY3</name>
<accession>P48946</accession>
<keyword id="KW-1185">Reference proteome</keyword>
<keyword id="KW-0687">Ribonucleoprotein</keyword>
<keyword id="KW-0689">Ribosomal protein</keyword>
<keyword id="KW-0694">RNA-binding</keyword>
<keyword id="KW-0699">rRNA-binding</keyword>
<comment type="function">
    <text evidence="1">Binds as a heterodimer with protein bS6 to the central domain of the 16S rRNA, where it helps stabilize the platform of the 30S subunit.</text>
</comment>
<comment type="subunit">
    <text evidence="1">Part of the 30S ribosomal subunit. Forms a tight heterodimer with protein bS6.</text>
</comment>
<comment type="similarity">
    <text evidence="1">Belongs to the bacterial ribosomal protein bS18 family.</text>
</comment>